<sequence length="161" mass="18172">MNPVISITLLLSVLQMSRGQRVISLTACLVNQNLRLDCRHENNTNLPIQHEFSLTREKKKHVLSGTLGVPEHTYRSRVNLFSDRFIKVLTLANFTTKDEGDYMCELRVSGQNPTSSNKTINVIRDKLVKCGGISLLVQNTSWLLLLLLSLSFLQATDFISL</sequence>
<protein>
    <recommendedName>
        <fullName>Thy-1 membrane glycoprotein</fullName>
    </recommendedName>
    <alternativeName>
        <fullName>Thy-1 antigen</fullName>
    </alternativeName>
    <cdAntigenName>CD90</cdAntigenName>
</protein>
<keyword id="KW-1003">Cell membrane</keyword>
<keyword id="KW-0903">Direct protein sequencing</keyword>
<keyword id="KW-1015">Disulfide bond</keyword>
<keyword id="KW-0325">Glycoprotein</keyword>
<keyword id="KW-0336">GPI-anchor</keyword>
<keyword id="KW-0393">Immunoglobulin domain</keyword>
<keyword id="KW-0449">Lipoprotein</keyword>
<keyword id="KW-0472">Membrane</keyword>
<keyword id="KW-0597">Phosphoprotein</keyword>
<keyword id="KW-0873">Pyrrolidone carboxylic acid</keyword>
<keyword id="KW-1185">Reference proteome</keyword>
<keyword id="KW-0730">Sialic acid</keyword>
<keyword id="KW-0732">Signal</keyword>
<feature type="signal peptide" evidence="3">
    <location>
        <begin position="1"/>
        <end position="19"/>
    </location>
</feature>
<feature type="chain" id="PRO_0000014979" description="Thy-1 membrane glycoprotein">
    <location>
        <begin position="20"/>
        <end position="130"/>
    </location>
</feature>
<feature type="propeptide" id="PRO_0000014980" description="Removed in mature form">
    <location>
        <begin position="131"/>
        <end position="161"/>
    </location>
</feature>
<feature type="domain" description="Ig-like V-type">
    <location>
        <begin position="20"/>
        <end position="126"/>
    </location>
</feature>
<feature type="modified residue" description="Pyrrolidone carboxylic acid" evidence="3">
    <location>
        <position position="20"/>
    </location>
</feature>
<feature type="modified residue" description="Phosphoserine" evidence="5">
    <location>
        <position position="82"/>
    </location>
</feature>
<feature type="lipid moiety-binding region" description="GPI-anchor amidated cysteine" evidence="2">
    <location>
        <position position="130"/>
    </location>
</feature>
<feature type="glycosylation site" description="N-linked (GlcNAc...) (complex) asparagine; alternate" evidence="3">
    <location>
        <position position="42"/>
    </location>
</feature>
<feature type="glycosylation site" description="N-linked (GlcNAc...) (high mannose) asparagine; alternate" evidence="3">
    <location>
        <position position="42"/>
    </location>
</feature>
<feature type="glycosylation site" description="N-linked (GlcNAc...) asparagine; alternate" evidence="6">
    <location>
        <position position="42"/>
    </location>
</feature>
<feature type="glycosylation site" description="N-linked (GlcNAc...) (complex) asparagine; alternate" evidence="3">
    <location>
        <position position="93"/>
    </location>
</feature>
<feature type="glycosylation site" description="N-linked (GlcNAc...) asparagine; alternate" evidence="6">
    <location>
        <position position="93"/>
    </location>
</feature>
<feature type="glycosylation site" description="N-linked (GlcNAc...) (high mannose) asparagine; in brain; alternate" evidence="3">
    <location>
        <position position="117"/>
    </location>
</feature>
<feature type="glycosylation site" description="N-linked (GlcNAc...) (hybrid) asparagine; in brain; alternate" evidence="3">
    <location>
        <position position="117"/>
    </location>
</feature>
<feature type="disulfide bond" evidence="1 3">
    <location>
        <begin position="28"/>
        <end position="130"/>
    </location>
</feature>
<feature type="disulfide bond" evidence="1 3">
    <location>
        <begin position="38"/>
        <end position="104"/>
    </location>
</feature>
<feature type="sequence conflict" description="In Ref. 1; CAA26931." evidence="4" ref="1">
    <original>E</original>
    <variation>Q</variation>
    <location>
        <position position="71"/>
    </location>
</feature>
<proteinExistence type="evidence at protein level"/>
<name>THY1_RAT</name>
<reference key="1">
    <citation type="journal article" date="1985" name="Fed. Proc.">
        <title>Thy-1: a hydrophobic transmembrane segment at the carboxyl terminus.</title>
        <authorList>
            <person name="Seki T."/>
            <person name="Chang H.-C."/>
            <person name="Moriuchi T."/>
            <person name="Denome R."/>
            <person name="Silver J."/>
        </authorList>
    </citation>
    <scope>NUCLEOTIDE SEQUENCE [GENOMIC DNA]</scope>
</reference>
<reference key="2">
    <citation type="journal article" date="1983" name="Nature">
        <title>Thy-1 cDNA sequence suggests a novel regulatory mechanism.</title>
        <authorList>
            <person name="Moriuchi T."/>
            <person name="Chang H.-C."/>
            <person name="Denome R."/>
            <person name="Silver J."/>
        </authorList>
    </citation>
    <scope>NUCLEOTIDE SEQUENCE OF 1-122</scope>
</reference>
<reference key="3">
    <citation type="journal article" date="1985" name="Nature">
        <title>Structural organization of the rat thy-1 gene.</title>
        <authorList>
            <person name="Seki T."/>
            <person name="Moriuchi T."/>
            <person name="Chang H.-C."/>
            <person name="Denome R."/>
            <person name="Silver J."/>
        </authorList>
    </citation>
    <scope>NUCLEOTIDE SEQUENCE [GENOMIC DNA] OF 20-161</scope>
</reference>
<reference key="4">
    <citation type="journal article" date="1984" name="FEBS Lett.">
        <title>Rat Thy-1 antigen has a hydrophobic segment at the carboxyl terminus.</title>
        <authorList>
            <person name="Moriuchi T."/>
            <person name="Silver J."/>
        </authorList>
    </citation>
    <scope>NUCLEOTIDE SEQUENCE OF 20-161</scope>
</reference>
<reference key="5">
    <citation type="journal article" date="1981" name="Biochem. J.">
        <title>Rat brain Thy-1 glycoprotein. The amino acid sequence, disulphide bonds and an unusual hydrophobic region.</title>
        <authorList>
            <person name="Campbell D.G."/>
            <person name="Gagnon J."/>
            <person name="Reid K.B.M."/>
            <person name="Williams A.F."/>
        </authorList>
    </citation>
    <scope>PROTEIN SEQUENCE OF 20-130</scope>
    <scope>PYROGLUTAMATE FORMATION AT GLN-20</scope>
    <scope>GLYCOSYLATION AT ASN-42; ASN-93 AND ASN-117</scope>
    <scope>DISULFIDE BONDS</scope>
</reference>
<reference key="6">
    <citation type="submission" date="2007-07" db="UniProtKB">
        <authorList>
            <person name="Lubec G."/>
            <person name="Chen W.-Q."/>
            <person name="Kang S.U."/>
        </authorList>
    </citation>
    <scope>PROTEIN SEQUENCE OF 78-84 AND 119-124</scope>
    <scope>IDENTIFICATION BY MASS SPECTROMETRY</scope>
    <source>
        <strain>Sprague-Dawley</strain>
        <tissue>Brain</tissue>
        <tissue>Hippocampus</tissue>
    </source>
</reference>
<reference key="7">
    <citation type="journal article" date="1987" name="EMBO J.">
        <title>Tissue-specific N-glycosylation, site-specific oligosaccharide patterns and lentil lectin recognition of rat Thy-1.</title>
        <authorList>
            <person name="Parekh R.B."/>
            <person name="Tse A.G.D."/>
            <person name="Dwek R.A."/>
            <person name="Williams A.F."/>
            <person name="Rademacher T.W."/>
        </authorList>
    </citation>
    <scope>STRUCTURE OF CARBOHYDRATES</scope>
</reference>
<reference key="8">
    <citation type="journal article" date="1988" name="Nature">
        <title>Complete structure of the glycosyl phosphatidylinositol membrane anchor of rat brain Thy-1 glycoprotein.</title>
        <authorList>
            <person name="Homans S.W."/>
            <person name="Ferguson M.A."/>
            <person name="Dwek R.A."/>
            <person name="Rademacher T.W."/>
            <person name="Anand R."/>
            <person name="Williams A.F."/>
        </authorList>
    </citation>
    <scope>STRUCTURE OF THE GPI-ANCHOR AT CYS-130</scope>
</reference>
<reference key="9">
    <citation type="journal article" date="2012" name="Nat. Commun.">
        <title>Quantitative maps of protein phosphorylation sites across 14 different rat organs and tissues.</title>
        <authorList>
            <person name="Lundby A."/>
            <person name="Secher A."/>
            <person name="Lage K."/>
            <person name="Nordsborg N.B."/>
            <person name="Dmytriyev A."/>
            <person name="Lundby C."/>
            <person name="Olsen J.V."/>
        </authorList>
    </citation>
    <scope>PHOSPHORYLATION [LARGE SCALE ANALYSIS] AT SER-82</scope>
    <scope>IDENTIFICATION BY MASS SPECTROMETRY [LARGE SCALE ANALYSIS]</scope>
</reference>
<reference key="10">
    <citation type="journal article" date="2013" name="J. Proteome Res.">
        <title>Site-specific glycan-peptide analysis for determination of N-glycoproteome heterogeneity.</title>
        <authorList>
            <person name="Parker B.L."/>
            <person name="Thaysen-Andersen M."/>
            <person name="Solis N."/>
            <person name="Scott N.E."/>
            <person name="Larsen M.R."/>
            <person name="Graham M.E."/>
            <person name="Packer N.H."/>
            <person name="Cordwell S.J."/>
        </authorList>
    </citation>
    <scope>GLYCOSYLATION [LARGE SCALE ANALYSIS] AT ASN-42 AND ASN-93</scope>
    <scope>IDENTIFICATION BY MASS SPECTROMETRY [LARGE SCALE ANALYSIS]</scope>
    <source>
        <tissue>Brain</tissue>
    </source>
</reference>
<organism>
    <name type="scientific">Rattus norvegicus</name>
    <name type="common">Rat</name>
    <dbReference type="NCBI Taxonomy" id="10116"/>
    <lineage>
        <taxon>Eukaryota</taxon>
        <taxon>Metazoa</taxon>
        <taxon>Chordata</taxon>
        <taxon>Craniata</taxon>
        <taxon>Vertebrata</taxon>
        <taxon>Euteleostomi</taxon>
        <taxon>Mammalia</taxon>
        <taxon>Eutheria</taxon>
        <taxon>Euarchontoglires</taxon>
        <taxon>Glires</taxon>
        <taxon>Rodentia</taxon>
        <taxon>Myomorpha</taxon>
        <taxon>Muroidea</taxon>
        <taxon>Muridae</taxon>
        <taxon>Murinae</taxon>
        <taxon>Rattus</taxon>
    </lineage>
</organism>
<accession>P01830</accession>
<dbReference type="EMBL" id="X03152">
    <property type="protein sequence ID" value="CAA26931.1"/>
    <property type="molecule type" value="Genomic_DNA"/>
</dbReference>
<dbReference type="EMBL" id="X03150">
    <property type="protein sequence ID" value="CAA26929.1"/>
    <property type="molecule type" value="mRNA"/>
</dbReference>
<dbReference type="EMBL" id="X02002">
    <property type="protein sequence ID" value="CAA26033.1"/>
    <property type="molecule type" value="Genomic_DNA"/>
</dbReference>
<dbReference type="EMBL" id="M18002">
    <property type="protein sequence ID" value="AAA42243.1"/>
    <property type="molecule type" value="mRNA"/>
</dbReference>
<dbReference type="EMBL" id="M10666">
    <property type="protein sequence ID" value="AAA42242.1"/>
    <property type="molecule type" value="mRNA"/>
</dbReference>
<dbReference type="PIR" id="B45909">
    <property type="entry name" value="TDRT"/>
</dbReference>
<dbReference type="RefSeq" id="NP_036805.1">
    <property type="nucleotide sequence ID" value="NM_012673.2"/>
</dbReference>
<dbReference type="SMR" id="P01830"/>
<dbReference type="BioGRID" id="246951">
    <property type="interactions" value="4"/>
</dbReference>
<dbReference type="DIP" id="DIP-1031N"/>
<dbReference type="FunCoup" id="P01830">
    <property type="interactions" value="389"/>
</dbReference>
<dbReference type="IntAct" id="P01830">
    <property type="interactions" value="4"/>
</dbReference>
<dbReference type="MINT" id="P01830"/>
<dbReference type="STRING" id="10116.ENSRNOP00000008685"/>
<dbReference type="GlyCosmos" id="P01830">
    <property type="glycosylation" value="3 sites, 25 glycans"/>
</dbReference>
<dbReference type="GlyGen" id="P01830">
    <property type="glycosylation" value="3 sites, 27 N-linked glycans (3 sites), 7 N-linked;o-linked glycans (1 site)"/>
</dbReference>
<dbReference type="iPTMnet" id="P01830"/>
<dbReference type="PhosphoSitePlus" id="P01830"/>
<dbReference type="SwissPalm" id="P01830"/>
<dbReference type="jPOST" id="P01830"/>
<dbReference type="PaxDb" id="10116-ENSRNOP00000008685"/>
<dbReference type="GeneID" id="24832"/>
<dbReference type="KEGG" id="rno:24832"/>
<dbReference type="UCSC" id="RGD:3860">
    <property type="organism name" value="rat"/>
</dbReference>
<dbReference type="AGR" id="RGD:3860"/>
<dbReference type="CTD" id="7070"/>
<dbReference type="RGD" id="3860">
    <property type="gene designation" value="Thy1"/>
</dbReference>
<dbReference type="VEuPathDB" id="HostDB:ENSRNOG00000006604"/>
<dbReference type="eggNOG" id="ENOG502S18P">
    <property type="taxonomic scope" value="Eukaryota"/>
</dbReference>
<dbReference type="HOGENOM" id="CLU_136861_0_0_1"/>
<dbReference type="InParanoid" id="P01830"/>
<dbReference type="OrthoDB" id="8396829at2759"/>
<dbReference type="PhylomeDB" id="P01830"/>
<dbReference type="TreeFam" id="TF336059"/>
<dbReference type="Reactome" id="R-RNO-163125">
    <property type="pathway name" value="Post-translational modification: synthesis of GPI-anchored proteins"/>
</dbReference>
<dbReference type="PRO" id="PR:P01830"/>
<dbReference type="Proteomes" id="UP000002494">
    <property type="component" value="Chromosome 8"/>
</dbReference>
<dbReference type="Bgee" id="ENSRNOG00000006604">
    <property type="expression patterns" value="Expressed in thymus and 19 other cell types or tissues"/>
</dbReference>
<dbReference type="GO" id="GO:0016324">
    <property type="term" value="C:apical plasma membrane"/>
    <property type="evidence" value="ECO:0000266"/>
    <property type="project" value="RGD"/>
</dbReference>
<dbReference type="GO" id="GO:0030673">
    <property type="term" value="C:axolemma"/>
    <property type="evidence" value="ECO:0000314"/>
    <property type="project" value="UniProtKB"/>
</dbReference>
<dbReference type="GO" id="GO:0009986">
    <property type="term" value="C:cell surface"/>
    <property type="evidence" value="ECO:0000314"/>
    <property type="project" value="UniProtKB"/>
</dbReference>
<dbReference type="GO" id="GO:0005829">
    <property type="term" value="C:cytosol"/>
    <property type="evidence" value="ECO:0000314"/>
    <property type="project" value="UniProtKB"/>
</dbReference>
<dbReference type="GO" id="GO:0030425">
    <property type="term" value="C:dendrite"/>
    <property type="evidence" value="ECO:0000266"/>
    <property type="project" value="RGD"/>
</dbReference>
<dbReference type="GO" id="GO:0032590">
    <property type="term" value="C:dendrite membrane"/>
    <property type="evidence" value="ECO:0000314"/>
    <property type="project" value="UniProtKB"/>
</dbReference>
<dbReference type="GO" id="GO:0009897">
    <property type="term" value="C:external side of plasma membrane"/>
    <property type="evidence" value="ECO:0000250"/>
    <property type="project" value="UniProtKB"/>
</dbReference>
<dbReference type="GO" id="GO:0098978">
    <property type="term" value="C:glutamatergic synapse"/>
    <property type="evidence" value="ECO:0000266"/>
    <property type="project" value="RGD"/>
</dbReference>
<dbReference type="GO" id="GO:0030426">
    <property type="term" value="C:growth cone"/>
    <property type="evidence" value="ECO:0000314"/>
    <property type="project" value="UniProtKB"/>
</dbReference>
<dbReference type="GO" id="GO:0045121">
    <property type="term" value="C:membrane raft"/>
    <property type="evidence" value="ECO:0000314"/>
    <property type="project" value="CAFA"/>
</dbReference>
<dbReference type="GO" id="GO:0032809">
    <property type="term" value="C:neuronal cell body membrane"/>
    <property type="evidence" value="ECO:0000314"/>
    <property type="project" value="UniProtKB"/>
</dbReference>
<dbReference type="GO" id="GO:0005886">
    <property type="term" value="C:plasma membrane"/>
    <property type="evidence" value="ECO:0000314"/>
    <property type="project" value="UniProtKB"/>
</dbReference>
<dbReference type="GO" id="GO:0098794">
    <property type="term" value="C:postsynapse"/>
    <property type="evidence" value="ECO:0000266"/>
    <property type="project" value="RGD"/>
</dbReference>
<dbReference type="GO" id="GO:0098793">
    <property type="term" value="C:presynapse"/>
    <property type="evidence" value="ECO:0000266"/>
    <property type="project" value="RGD"/>
</dbReference>
<dbReference type="GO" id="GO:0019899">
    <property type="term" value="F:enzyme binding"/>
    <property type="evidence" value="ECO:0000353"/>
    <property type="project" value="RGD"/>
</dbReference>
<dbReference type="GO" id="GO:0034235">
    <property type="term" value="F:GPI anchor binding"/>
    <property type="evidence" value="ECO:0000314"/>
    <property type="project" value="UniProtKB"/>
</dbReference>
<dbReference type="GO" id="GO:0005096">
    <property type="term" value="F:GTPase activator activity"/>
    <property type="evidence" value="ECO:0000314"/>
    <property type="project" value="UniProtKB"/>
</dbReference>
<dbReference type="GO" id="GO:0005178">
    <property type="term" value="F:integrin binding"/>
    <property type="evidence" value="ECO:0000250"/>
    <property type="project" value="UniProtKB"/>
</dbReference>
<dbReference type="GO" id="GO:0019901">
    <property type="term" value="F:protein kinase binding"/>
    <property type="evidence" value="ECO:0000353"/>
    <property type="project" value="RGD"/>
</dbReference>
<dbReference type="GO" id="GO:0001525">
    <property type="term" value="P:angiogenesis"/>
    <property type="evidence" value="ECO:0000250"/>
    <property type="project" value="UniProtKB"/>
</dbReference>
<dbReference type="GO" id="GO:0098609">
    <property type="term" value="P:cell-cell adhesion"/>
    <property type="evidence" value="ECO:0000315"/>
    <property type="project" value="UniProtKB"/>
</dbReference>
<dbReference type="GO" id="GO:0007267">
    <property type="term" value="P:cell-cell signaling"/>
    <property type="evidence" value="ECO:0000314"/>
    <property type="project" value="UniProtKB"/>
</dbReference>
<dbReference type="GO" id="GO:0007010">
    <property type="term" value="P:cytoskeleton organization"/>
    <property type="evidence" value="ECO:0000314"/>
    <property type="project" value="UniProtKB"/>
</dbReference>
<dbReference type="GO" id="GO:0048041">
    <property type="term" value="P:focal adhesion assembly"/>
    <property type="evidence" value="ECO:0000314"/>
    <property type="project" value="UniProtKB"/>
</dbReference>
<dbReference type="GO" id="GO:0034113">
    <property type="term" value="P:heterotypic cell-cell adhesion"/>
    <property type="evidence" value="ECO:0000266"/>
    <property type="project" value="RGD"/>
</dbReference>
<dbReference type="GO" id="GO:0007229">
    <property type="term" value="P:integrin-mediated signaling pathway"/>
    <property type="evidence" value="ECO:0000250"/>
    <property type="project" value="UniProtKB"/>
</dbReference>
<dbReference type="GO" id="GO:0045576">
    <property type="term" value="P:mast cell activation"/>
    <property type="evidence" value="ECO:0000303"/>
    <property type="project" value="UniProtKB"/>
</dbReference>
<dbReference type="GO" id="GO:0043066">
    <property type="term" value="P:negative regulation of apoptotic process"/>
    <property type="evidence" value="ECO:0000304"/>
    <property type="project" value="UniProtKB"/>
</dbReference>
<dbReference type="GO" id="GO:0050771">
    <property type="term" value="P:negative regulation of axonogenesis"/>
    <property type="evidence" value="ECO:0000314"/>
    <property type="project" value="UniProtKB"/>
</dbReference>
<dbReference type="GO" id="GO:0030336">
    <property type="term" value="P:negative regulation of cell migration"/>
    <property type="evidence" value="ECO:0000314"/>
    <property type="project" value="UniProtKB"/>
</dbReference>
<dbReference type="GO" id="GO:0048147">
    <property type="term" value="P:negative regulation of fibroblast proliferation"/>
    <property type="evidence" value="ECO:0000303"/>
    <property type="project" value="UniProtKB"/>
</dbReference>
<dbReference type="GO" id="GO:0070571">
    <property type="term" value="P:negative regulation of neuron projection regeneration"/>
    <property type="evidence" value="ECO:0000315"/>
    <property type="project" value="UniProtKB"/>
</dbReference>
<dbReference type="GO" id="GO:0006469">
    <property type="term" value="P:negative regulation of protein kinase activity"/>
    <property type="evidence" value="ECO:0000314"/>
    <property type="project" value="UniProtKB"/>
</dbReference>
<dbReference type="GO" id="GO:0050860">
    <property type="term" value="P:negative regulation of T cell receptor signaling pathway"/>
    <property type="evidence" value="ECO:0000250"/>
    <property type="project" value="UniProtKB"/>
</dbReference>
<dbReference type="GO" id="GO:0002693">
    <property type="term" value="P:positive regulation of cellular extravasation"/>
    <property type="evidence" value="ECO:0000266"/>
    <property type="project" value="RGD"/>
</dbReference>
<dbReference type="GO" id="GO:0051894">
    <property type="term" value="P:positive regulation of focal adhesion assembly"/>
    <property type="evidence" value="ECO:0000250"/>
    <property type="project" value="UniProtKB"/>
</dbReference>
<dbReference type="GO" id="GO:0043547">
    <property type="term" value="P:positive regulation of GTPase activity"/>
    <property type="evidence" value="ECO:0000314"/>
    <property type="project" value="UniProtKB"/>
</dbReference>
<dbReference type="GO" id="GO:0050731">
    <property type="term" value="P:positive regulation of peptidyl-tyrosine phosphorylation"/>
    <property type="evidence" value="ECO:0000303"/>
    <property type="project" value="UniProtKB"/>
</dbReference>
<dbReference type="GO" id="GO:0051281">
    <property type="term" value="P:positive regulation of release of sequestered calcium ion into cytosol"/>
    <property type="evidence" value="ECO:0000314"/>
    <property type="project" value="UniProtKB"/>
</dbReference>
<dbReference type="GO" id="GO:0050870">
    <property type="term" value="P:positive regulation of T cell activation"/>
    <property type="evidence" value="ECO:0000314"/>
    <property type="project" value="UniProtKB"/>
</dbReference>
<dbReference type="GO" id="GO:0046777">
    <property type="term" value="P:protein autophosphorylation"/>
    <property type="evidence" value="ECO:0000314"/>
    <property type="project" value="CACAO"/>
</dbReference>
<dbReference type="GO" id="GO:0043113">
    <property type="term" value="P:receptor clustering"/>
    <property type="evidence" value="ECO:0000314"/>
    <property type="project" value="UniProtKB"/>
</dbReference>
<dbReference type="GO" id="GO:0001952">
    <property type="term" value="P:regulation of cell-matrix adhesion"/>
    <property type="evidence" value="ECO:0000266"/>
    <property type="project" value="RGD"/>
</dbReference>
<dbReference type="GO" id="GO:2000298">
    <property type="term" value="P:regulation of Rho-dependent protein serine/threonine kinase activity"/>
    <property type="evidence" value="ECO:0000250"/>
    <property type="project" value="UniProtKB"/>
</dbReference>
<dbReference type="GO" id="GO:0048678">
    <property type="term" value="P:response to axon injury"/>
    <property type="evidence" value="ECO:0000270"/>
    <property type="project" value="RGD"/>
</dbReference>
<dbReference type="GO" id="GO:0046549">
    <property type="term" value="P:retinal cone cell development"/>
    <property type="evidence" value="ECO:0000250"/>
    <property type="project" value="UniProtKB"/>
</dbReference>
<dbReference type="GO" id="GO:0050852">
    <property type="term" value="P:T cell receptor signaling pathway"/>
    <property type="evidence" value="ECO:0000315"/>
    <property type="project" value="UniProtKB"/>
</dbReference>
<dbReference type="FunFam" id="2.60.40.10:FF:001319">
    <property type="entry name" value="Thy-1 membrane glycoprotein"/>
    <property type="match status" value="1"/>
</dbReference>
<dbReference type="Gene3D" id="2.60.40.10">
    <property type="entry name" value="Immunoglobulins"/>
    <property type="match status" value="1"/>
</dbReference>
<dbReference type="InterPro" id="IPR007110">
    <property type="entry name" value="Ig-like_dom"/>
</dbReference>
<dbReference type="InterPro" id="IPR036179">
    <property type="entry name" value="Ig-like_dom_sf"/>
</dbReference>
<dbReference type="InterPro" id="IPR013783">
    <property type="entry name" value="Ig-like_fold"/>
</dbReference>
<dbReference type="InterPro" id="IPR013106">
    <property type="entry name" value="Ig_V-set"/>
</dbReference>
<dbReference type="InterPro" id="IPR013151">
    <property type="entry name" value="Immunoglobulin_dom"/>
</dbReference>
<dbReference type="InterPro" id="IPR033292">
    <property type="entry name" value="THY1"/>
</dbReference>
<dbReference type="PANTHER" id="PTHR19226">
    <property type="entry name" value="THY-1 MEMBRANE GLYCOPROTEIN"/>
    <property type="match status" value="1"/>
</dbReference>
<dbReference type="PANTHER" id="PTHR19226:SF2">
    <property type="entry name" value="THY-1 MEMBRANE GLYCOPROTEIN"/>
    <property type="match status" value="1"/>
</dbReference>
<dbReference type="Pfam" id="PF00047">
    <property type="entry name" value="ig"/>
    <property type="match status" value="1"/>
</dbReference>
<dbReference type="SMART" id="SM00406">
    <property type="entry name" value="IGv"/>
    <property type="match status" value="1"/>
</dbReference>
<dbReference type="SUPFAM" id="SSF48726">
    <property type="entry name" value="Immunoglobulin"/>
    <property type="match status" value="1"/>
</dbReference>
<dbReference type="PROSITE" id="PS50835">
    <property type="entry name" value="IG_LIKE"/>
    <property type="match status" value="1"/>
</dbReference>
<comment type="function">
    <text>May play a role in cell-cell or cell-ligand interactions during synaptogenesis and other events in the brain.</text>
</comment>
<comment type="subcellular location">
    <subcellularLocation>
        <location>Cell membrane</location>
        <topology>Lipid-anchor</topology>
        <topology>GPI-anchor</topology>
    </subcellularLocation>
</comment>
<comment type="tissue specificity">
    <text>Abundant in lymphoid tissues.</text>
</comment>
<comment type="PTM">
    <text evidence="3">Glycosylation is tissue specific. Sialylation of N-glycans at Asn-93 in brain and at Asn-42, Asn-93 and Asn-117 in thymus.</text>
</comment>
<evidence type="ECO:0000255" key="1">
    <source>
        <dbReference type="PROSITE-ProRule" id="PRU00114"/>
    </source>
</evidence>
<evidence type="ECO:0000269" key="2">
    <source>
    </source>
</evidence>
<evidence type="ECO:0000269" key="3">
    <source>
    </source>
</evidence>
<evidence type="ECO:0000305" key="4"/>
<evidence type="ECO:0007744" key="5">
    <source>
    </source>
</evidence>
<evidence type="ECO:0007744" key="6">
    <source>
    </source>
</evidence>
<gene>
    <name type="primary">Thy1</name>
    <name type="synonym">Thy-1</name>
</gene>